<name>SPESP_BOVIN</name>
<dbReference type="EMBL" id="BC110032">
    <property type="protein sequence ID" value="AAI10033.1"/>
    <property type="molecule type" value="mRNA"/>
</dbReference>
<dbReference type="RefSeq" id="NP_001073241.1">
    <property type="nucleotide sequence ID" value="NM_001079773.2"/>
</dbReference>
<dbReference type="SMR" id="Q32KL7"/>
<dbReference type="FunCoup" id="Q32KL7">
    <property type="interactions" value="114"/>
</dbReference>
<dbReference type="STRING" id="9913.ENSBTAP00000007865"/>
<dbReference type="GlyCosmos" id="Q32KL7">
    <property type="glycosylation" value="1 site, No reported glycans"/>
</dbReference>
<dbReference type="GlyGen" id="Q32KL7">
    <property type="glycosylation" value="1 site"/>
</dbReference>
<dbReference type="PaxDb" id="9913-ENSBTAP00000007865"/>
<dbReference type="GeneID" id="513571"/>
<dbReference type="KEGG" id="bta:513571"/>
<dbReference type="CTD" id="246777"/>
<dbReference type="eggNOG" id="ENOG502SG7W">
    <property type="taxonomic scope" value="Eukaryota"/>
</dbReference>
<dbReference type="HOGENOM" id="CLU_787463_0_0_1"/>
<dbReference type="InParanoid" id="Q32KL7"/>
<dbReference type="OrthoDB" id="9530574at2759"/>
<dbReference type="TreeFam" id="TF337441"/>
<dbReference type="Proteomes" id="UP000009136">
    <property type="component" value="Unplaced"/>
</dbReference>
<dbReference type="GO" id="GO:0001669">
    <property type="term" value="C:acrosomal vesicle"/>
    <property type="evidence" value="ECO:0000318"/>
    <property type="project" value="GO_Central"/>
</dbReference>
<dbReference type="GO" id="GO:0007340">
    <property type="term" value="P:acrosome reaction"/>
    <property type="evidence" value="ECO:0000318"/>
    <property type="project" value="GO_Central"/>
</dbReference>
<dbReference type="GO" id="GO:0009566">
    <property type="term" value="P:fertilization"/>
    <property type="evidence" value="ECO:0000250"/>
    <property type="project" value="UniProtKB"/>
</dbReference>
<dbReference type="GO" id="GO:0007342">
    <property type="term" value="P:fusion of sperm to egg plasma membrane involved in single fertilization"/>
    <property type="evidence" value="ECO:0000318"/>
    <property type="project" value="GO_Central"/>
</dbReference>
<dbReference type="GO" id="GO:0035036">
    <property type="term" value="P:sperm-egg recognition"/>
    <property type="evidence" value="ECO:0000250"/>
    <property type="project" value="UniProtKB"/>
</dbReference>
<dbReference type="InterPro" id="IPR026743">
    <property type="entry name" value="Equatorial_segment"/>
</dbReference>
<dbReference type="PANTHER" id="PTHR31667">
    <property type="entry name" value="SPERM EQUATORIAL SEGMENT PROTEIN 1"/>
    <property type="match status" value="1"/>
</dbReference>
<dbReference type="PANTHER" id="PTHR31667:SF2">
    <property type="entry name" value="SPERM EQUATORIAL SEGMENT PROTEIN 1"/>
    <property type="match status" value="1"/>
</dbReference>
<dbReference type="Pfam" id="PF15754">
    <property type="entry name" value="SPESP1"/>
    <property type="match status" value="1"/>
</dbReference>
<sequence length="366" mass="41410">MKFLVLLVALLLWPSSLPAYRRVTVTPDEEQNLNHYVQVLQNLILSVPTKEPGRQKKSKSPNNANFIGPRVSRVKELKYTHDVGPGDNDVLINPVSEETTTFPTRGFTLEIDKKKRTKSTAFWSIKPSNVSVVLHAKEPFIEKDEPEPEPEPEPEPEPVEHRTGAPTQVPSVTEPSQDVTSLSGSTDLGTATEEEDVPQLSGDNEMDYLESHDMYNEDVLKRIADINSQLHHVPLPESYKPEYRADIRASKEHLKRSLALAIAAEHKLEKMYKSQMLPQGRSSGGVYDIITVINMLYNSRYKLSEYLDIKYVPLEMRGKATVVVHTLKRILCVGHGEETHNLLKQLLNNNIRILHILDTHDKDDSS</sequence>
<evidence type="ECO:0000250" key="1">
    <source>
        <dbReference type="UniProtKB" id="Q6UW49"/>
    </source>
</evidence>
<evidence type="ECO:0000250" key="2">
    <source>
        <dbReference type="UniProtKB" id="Q9D5A0"/>
    </source>
</evidence>
<evidence type="ECO:0000255" key="3"/>
<evidence type="ECO:0000256" key="4">
    <source>
        <dbReference type="SAM" id="MobiDB-lite"/>
    </source>
</evidence>
<evidence type="ECO:0000312" key="5">
    <source>
        <dbReference type="EMBL" id="AAI10033.1"/>
    </source>
</evidence>
<organism>
    <name type="scientific">Bos taurus</name>
    <name type="common">Bovine</name>
    <dbReference type="NCBI Taxonomy" id="9913"/>
    <lineage>
        <taxon>Eukaryota</taxon>
        <taxon>Metazoa</taxon>
        <taxon>Chordata</taxon>
        <taxon>Craniata</taxon>
        <taxon>Vertebrata</taxon>
        <taxon>Euteleostomi</taxon>
        <taxon>Mammalia</taxon>
        <taxon>Eutheria</taxon>
        <taxon>Laurasiatheria</taxon>
        <taxon>Artiodactyla</taxon>
        <taxon>Ruminantia</taxon>
        <taxon>Pecora</taxon>
        <taxon>Bovidae</taxon>
        <taxon>Bovinae</taxon>
        <taxon>Bos</taxon>
    </lineage>
</organism>
<proteinExistence type="evidence at transcript level"/>
<accession>Q32KL7</accession>
<comment type="function">
    <text evidence="2">Involved in fertilization ability of sperm.</text>
</comment>
<comment type="subcellular location">
    <subcellularLocation>
        <location evidence="1">Cytoplasmic vesicle</location>
        <location evidence="1">Secretory vesicle</location>
        <location evidence="1">Acrosome</location>
    </subcellularLocation>
    <text evidence="1 2">Small proacrosomal granules (during the Golgi phase), enlarged acrosomal vesicles (during the cap phase), acrosome (during the elongating phase), equatorial segment of the acrosome (during the maturation phase) (By similarity). After acrosome reaction localizes to the equatorial segment region in both noncapacitated and capacitated, acrosome-reacted sperm (By similarity).</text>
</comment>
<comment type="PTM">
    <text evidence="2">Glycosylated. In testis there are two predominant forms of 77- and 67-kDa and a form of 47-kDa, whereas in epididymal sperm from caput, corpus, and cauda there are two forms of 47- and 43-kDa. Testis forms contain complex carbohydrate residues. Epididymal sperm forms are N-glycosylated. Then undergoes significant glycosylation in the testis and that the majority of these glycoconjugates are removed by the time sperm reach the caput epididymis.</text>
</comment>
<comment type="similarity">
    <text evidence="3">Belongs to the SPESP1 family.</text>
</comment>
<keyword id="KW-0968">Cytoplasmic vesicle</keyword>
<keyword id="KW-0217">Developmental protein</keyword>
<keyword id="KW-0325">Glycoprotein</keyword>
<keyword id="KW-1185">Reference proteome</keyword>
<keyword id="KW-0732">Signal</keyword>
<protein>
    <recommendedName>
        <fullName evidence="1">Sperm equatorial segment protein 1</fullName>
    </recommendedName>
</protein>
<reference evidence="5" key="1">
    <citation type="submission" date="2005-11" db="EMBL/GenBank/DDBJ databases">
        <authorList>
            <consortium name="NIH - Mammalian Gene Collection (MGC) project"/>
        </authorList>
    </citation>
    <scope>NUCLEOTIDE SEQUENCE [LARGE SCALE MRNA]</scope>
    <source>
        <strain evidence="5">Crossbred X Angus</strain>
        <tissue evidence="5">Liver</tissue>
    </source>
</reference>
<gene>
    <name evidence="1" type="primary">SPESP1</name>
</gene>
<feature type="signal peptide" evidence="3">
    <location>
        <begin position="1"/>
        <end position="18"/>
    </location>
</feature>
<feature type="chain" id="PRO_0000274544" description="Sperm equatorial segment protein 1" evidence="3">
    <location>
        <begin position="19"/>
        <end position="366"/>
    </location>
</feature>
<feature type="region of interest" description="Disordered" evidence="4">
    <location>
        <begin position="139"/>
        <end position="204"/>
    </location>
</feature>
<feature type="compositionally biased region" description="Acidic residues" evidence="4">
    <location>
        <begin position="144"/>
        <end position="157"/>
    </location>
</feature>
<feature type="compositionally biased region" description="Polar residues" evidence="4">
    <location>
        <begin position="165"/>
        <end position="189"/>
    </location>
</feature>
<feature type="glycosylation site" description="N-linked (GlcNAc...) asparagine" evidence="3">
    <location>
        <position position="129"/>
    </location>
</feature>